<keyword id="KW-1003">Cell membrane</keyword>
<keyword id="KW-0966">Cell projection</keyword>
<keyword id="KW-0325">Glycoprotein</keyword>
<keyword id="KW-0336">GPI-anchor</keyword>
<keyword id="KW-0358">Heparin-binding</keyword>
<keyword id="KW-0433">Leucine-rich repeat</keyword>
<keyword id="KW-0449">Lipoprotein</keyword>
<keyword id="KW-0472">Membrane</keyword>
<keyword id="KW-0675">Receptor</keyword>
<keyword id="KW-1185">Reference proteome</keyword>
<keyword id="KW-0677">Repeat</keyword>
<keyword id="KW-0732">Signal</keyword>
<keyword id="KW-0812">Transmembrane</keyword>
<keyword id="KW-1133">Transmembrane helix</keyword>
<dbReference type="EMBL" id="AY250218">
    <property type="protein sequence ID" value="AAP82835.1"/>
    <property type="molecule type" value="mRNA"/>
</dbReference>
<dbReference type="EMBL" id="AK033286">
    <property type="protein sequence ID" value="BAC28223.1"/>
    <property type="molecule type" value="mRNA"/>
</dbReference>
<dbReference type="EMBL" id="AK140456">
    <property type="protein sequence ID" value="BAE24396.1"/>
    <property type="molecule type" value="mRNA"/>
</dbReference>
<dbReference type="EMBL" id="AL603905">
    <property type="status" value="NOT_ANNOTATED_CDS"/>
    <property type="molecule type" value="Genomic_DNA"/>
</dbReference>
<dbReference type="EMBL" id="BC030471">
    <property type="protein sequence ID" value="AAH30471.1"/>
    <property type="molecule type" value="mRNA"/>
</dbReference>
<dbReference type="EMBL" id="BK001304">
    <property type="protein sequence ID" value="DAA01387.1"/>
    <property type="molecule type" value="mRNA"/>
</dbReference>
<dbReference type="CCDS" id="CCDS25043.1"/>
<dbReference type="RefSeq" id="NP_808376.1">
    <property type="nucleotide sequence ID" value="NM_177708.5"/>
</dbReference>
<dbReference type="SMR" id="Q8K0S5"/>
<dbReference type="FunCoup" id="Q8K0S5">
    <property type="interactions" value="230"/>
</dbReference>
<dbReference type="STRING" id="10090.ENSMUSP00000099572"/>
<dbReference type="GlyConnect" id="2682">
    <property type="glycosylation" value="3 N-Linked glycans (1 site)"/>
</dbReference>
<dbReference type="GlyCosmos" id="Q8K0S5">
    <property type="glycosylation" value="1 site, 3 glycans"/>
</dbReference>
<dbReference type="GlyGen" id="Q8K0S5">
    <property type="glycosylation" value="3 sites, 4 N-linked glycans (2 sites), 1 O-linked glycan (1 site)"/>
</dbReference>
<dbReference type="iPTMnet" id="Q8K0S5"/>
<dbReference type="PhosphoSitePlus" id="Q8K0S5"/>
<dbReference type="PaxDb" id="10090-ENSMUSP00000099572"/>
<dbReference type="PeptideAtlas" id="Q8K0S5"/>
<dbReference type="ProteomicsDB" id="301910"/>
<dbReference type="Antibodypedia" id="50502">
    <property type="antibodies" value="139 antibodies from 24 providers"/>
</dbReference>
<dbReference type="DNASU" id="237847"/>
<dbReference type="Ensembl" id="ENSMUST00000102514.4">
    <property type="protein sequence ID" value="ENSMUSP00000099572.4"/>
    <property type="gene ID" value="ENSMUSG00000045287.7"/>
</dbReference>
<dbReference type="GeneID" id="237847"/>
<dbReference type="KEGG" id="mmu:237847"/>
<dbReference type="UCSC" id="uc007kdh.1">
    <property type="organism name" value="mouse"/>
</dbReference>
<dbReference type="AGR" id="MGI:2661375"/>
<dbReference type="CTD" id="146760"/>
<dbReference type="MGI" id="MGI:2661375">
    <property type="gene designation" value="Rtn4rl1"/>
</dbReference>
<dbReference type="VEuPathDB" id="HostDB:ENSMUSG00000045287"/>
<dbReference type="eggNOG" id="KOG0619">
    <property type="taxonomic scope" value="Eukaryota"/>
</dbReference>
<dbReference type="GeneTree" id="ENSGT00940000157112"/>
<dbReference type="HOGENOM" id="CLU_000288_18_6_1"/>
<dbReference type="InParanoid" id="Q8K0S5"/>
<dbReference type="OMA" id="NIAHPSR"/>
<dbReference type="OrthoDB" id="6363818at2759"/>
<dbReference type="PhylomeDB" id="Q8K0S5"/>
<dbReference type="TreeFam" id="TF330080"/>
<dbReference type="BioGRID-ORCS" id="237847">
    <property type="hits" value="1 hit in 77 CRISPR screens"/>
</dbReference>
<dbReference type="ChiTaRS" id="Rtn4rl1">
    <property type="organism name" value="mouse"/>
</dbReference>
<dbReference type="PRO" id="PR:Q8K0S5"/>
<dbReference type="Proteomes" id="UP000000589">
    <property type="component" value="Chromosome 11"/>
</dbReference>
<dbReference type="RNAct" id="Q8K0S5">
    <property type="molecule type" value="protein"/>
</dbReference>
<dbReference type="Bgee" id="ENSMUSG00000045287">
    <property type="expression patterns" value="Expressed in lumbar dorsal root ganglion and 229 other cell types or tissues"/>
</dbReference>
<dbReference type="GO" id="GO:0042995">
    <property type="term" value="C:cell projection"/>
    <property type="evidence" value="ECO:0007669"/>
    <property type="project" value="UniProtKB-SubCell"/>
</dbReference>
<dbReference type="GO" id="GO:0009986">
    <property type="term" value="C:cell surface"/>
    <property type="evidence" value="ECO:0000250"/>
    <property type="project" value="UniProtKB"/>
</dbReference>
<dbReference type="GO" id="GO:0045121">
    <property type="term" value="C:membrane raft"/>
    <property type="evidence" value="ECO:0007669"/>
    <property type="project" value="UniProtKB-SubCell"/>
</dbReference>
<dbReference type="GO" id="GO:0043204">
    <property type="term" value="C:perikaryon"/>
    <property type="evidence" value="ECO:0007669"/>
    <property type="project" value="UniProtKB-SubCell"/>
</dbReference>
<dbReference type="GO" id="GO:0005886">
    <property type="term" value="C:plasma membrane"/>
    <property type="evidence" value="ECO:0000250"/>
    <property type="project" value="UniProtKB"/>
</dbReference>
<dbReference type="GO" id="GO:0098552">
    <property type="term" value="C:side of membrane"/>
    <property type="evidence" value="ECO:0007669"/>
    <property type="project" value="UniProtKB-KW"/>
</dbReference>
<dbReference type="GO" id="GO:0035374">
    <property type="term" value="F:chondroitin sulfate binding"/>
    <property type="evidence" value="ECO:0000314"/>
    <property type="project" value="UniProtKB"/>
</dbReference>
<dbReference type="GO" id="GO:0008201">
    <property type="term" value="F:heparin binding"/>
    <property type="evidence" value="ECO:0000315"/>
    <property type="project" value="UniProtKB"/>
</dbReference>
<dbReference type="GO" id="GO:0038023">
    <property type="term" value="F:signaling receptor activity"/>
    <property type="evidence" value="ECO:0000250"/>
    <property type="project" value="UniProtKB"/>
</dbReference>
<dbReference type="GO" id="GO:0022038">
    <property type="term" value="P:corpus callosum development"/>
    <property type="evidence" value="ECO:0000315"/>
    <property type="project" value="UniProtKB"/>
</dbReference>
<dbReference type="GO" id="GO:0048681">
    <property type="term" value="P:negative regulation of axon regeneration"/>
    <property type="evidence" value="ECO:0000315"/>
    <property type="project" value="UniProtKB"/>
</dbReference>
<dbReference type="GO" id="GO:0010977">
    <property type="term" value="P:negative regulation of neuron projection development"/>
    <property type="evidence" value="ECO:0000315"/>
    <property type="project" value="UniProtKB"/>
</dbReference>
<dbReference type="FunFam" id="3.80.10.10:FF:000018">
    <property type="entry name" value="Reticulon 4 receptor"/>
    <property type="match status" value="1"/>
</dbReference>
<dbReference type="Gene3D" id="3.80.10.10">
    <property type="entry name" value="Ribonuclease Inhibitor"/>
    <property type="match status" value="1"/>
</dbReference>
<dbReference type="InterPro" id="IPR001611">
    <property type="entry name" value="Leu-rich_rpt"/>
</dbReference>
<dbReference type="InterPro" id="IPR003591">
    <property type="entry name" value="Leu-rich_rpt_typical-subtyp"/>
</dbReference>
<dbReference type="InterPro" id="IPR032675">
    <property type="entry name" value="LRR_dom_sf"/>
</dbReference>
<dbReference type="InterPro" id="IPR050541">
    <property type="entry name" value="LRR_TM_domain-containing"/>
</dbReference>
<dbReference type="PANTHER" id="PTHR24369">
    <property type="entry name" value="ANTIGEN BSP, PUTATIVE-RELATED"/>
    <property type="match status" value="1"/>
</dbReference>
<dbReference type="PANTHER" id="PTHR24369:SF196">
    <property type="entry name" value="RETICULON 4 RECEPTOR LIKE 1"/>
    <property type="match status" value="1"/>
</dbReference>
<dbReference type="Pfam" id="PF13855">
    <property type="entry name" value="LRR_8"/>
    <property type="match status" value="3"/>
</dbReference>
<dbReference type="SMART" id="SM00369">
    <property type="entry name" value="LRR_TYP"/>
    <property type="match status" value="7"/>
</dbReference>
<dbReference type="SUPFAM" id="SSF52058">
    <property type="entry name" value="L domain-like"/>
    <property type="match status" value="1"/>
</dbReference>
<dbReference type="PROSITE" id="PS51450">
    <property type="entry name" value="LRR"/>
    <property type="match status" value="6"/>
</dbReference>
<reference evidence="12 14" key="1">
    <citation type="journal article" date="2003" name="Mol. Cell. Neurosci.">
        <title>Two novel mammalian nogo receptor homologs differentially expressed in the central and peripheral nervous systems.</title>
        <authorList>
            <person name="Lauren J."/>
            <person name="Airaksinen M.S."/>
            <person name="Saarma M."/>
            <person name="Timmusk T."/>
        </authorList>
    </citation>
    <scope>NUCLEOTIDE SEQUENCE [MRNA]</scope>
    <scope>DEVELOPMENTAL STAGE</scope>
    <source>
        <tissue evidence="6">Brain</tissue>
    </source>
</reference>
<reference evidence="15" key="2">
    <citation type="journal article" date="2005" name="Science">
        <title>The transcriptional landscape of the mammalian genome.</title>
        <authorList>
            <person name="Carninci P."/>
            <person name="Kasukawa T."/>
            <person name="Katayama S."/>
            <person name="Gough J."/>
            <person name="Frith M.C."/>
            <person name="Maeda N."/>
            <person name="Oyama R."/>
            <person name="Ravasi T."/>
            <person name="Lenhard B."/>
            <person name="Wells C."/>
            <person name="Kodzius R."/>
            <person name="Shimokawa K."/>
            <person name="Bajic V.B."/>
            <person name="Brenner S.E."/>
            <person name="Batalov S."/>
            <person name="Forrest A.R."/>
            <person name="Zavolan M."/>
            <person name="Davis M.J."/>
            <person name="Wilming L.G."/>
            <person name="Aidinis V."/>
            <person name="Allen J.E."/>
            <person name="Ambesi-Impiombato A."/>
            <person name="Apweiler R."/>
            <person name="Aturaliya R.N."/>
            <person name="Bailey T.L."/>
            <person name="Bansal M."/>
            <person name="Baxter L."/>
            <person name="Beisel K.W."/>
            <person name="Bersano T."/>
            <person name="Bono H."/>
            <person name="Chalk A.M."/>
            <person name="Chiu K.P."/>
            <person name="Choudhary V."/>
            <person name="Christoffels A."/>
            <person name="Clutterbuck D.R."/>
            <person name="Crowe M.L."/>
            <person name="Dalla E."/>
            <person name="Dalrymple B.P."/>
            <person name="de Bono B."/>
            <person name="Della Gatta G."/>
            <person name="di Bernardo D."/>
            <person name="Down T."/>
            <person name="Engstrom P."/>
            <person name="Fagiolini M."/>
            <person name="Faulkner G."/>
            <person name="Fletcher C.F."/>
            <person name="Fukushima T."/>
            <person name="Furuno M."/>
            <person name="Futaki S."/>
            <person name="Gariboldi M."/>
            <person name="Georgii-Hemming P."/>
            <person name="Gingeras T.R."/>
            <person name="Gojobori T."/>
            <person name="Green R.E."/>
            <person name="Gustincich S."/>
            <person name="Harbers M."/>
            <person name="Hayashi Y."/>
            <person name="Hensch T.K."/>
            <person name="Hirokawa N."/>
            <person name="Hill D."/>
            <person name="Huminiecki L."/>
            <person name="Iacono M."/>
            <person name="Ikeo K."/>
            <person name="Iwama A."/>
            <person name="Ishikawa T."/>
            <person name="Jakt M."/>
            <person name="Kanapin A."/>
            <person name="Katoh M."/>
            <person name="Kawasawa Y."/>
            <person name="Kelso J."/>
            <person name="Kitamura H."/>
            <person name="Kitano H."/>
            <person name="Kollias G."/>
            <person name="Krishnan S.P."/>
            <person name="Kruger A."/>
            <person name="Kummerfeld S.K."/>
            <person name="Kurochkin I.V."/>
            <person name="Lareau L.F."/>
            <person name="Lazarevic D."/>
            <person name="Lipovich L."/>
            <person name="Liu J."/>
            <person name="Liuni S."/>
            <person name="McWilliam S."/>
            <person name="Madan Babu M."/>
            <person name="Madera M."/>
            <person name="Marchionni L."/>
            <person name="Matsuda H."/>
            <person name="Matsuzawa S."/>
            <person name="Miki H."/>
            <person name="Mignone F."/>
            <person name="Miyake S."/>
            <person name="Morris K."/>
            <person name="Mottagui-Tabar S."/>
            <person name="Mulder N."/>
            <person name="Nakano N."/>
            <person name="Nakauchi H."/>
            <person name="Ng P."/>
            <person name="Nilsson R."/>
            <person name="Nishiguchi S."/>
            <person name="Nishikawa S."/>
            <person name="Nori F."/>
            <person name="Ohara O."/>
            <person name="Okazaki Y."/>
            <person name="Orlando V."/>
            <person name="Pang K.C."/>
            <person name="Pavan W.J."/>
            <person name="Pavesi G."/>
            <person name="Pesole G."/>
            <person name="Petrovsky N."/>
            <person name="Piazza S."/>
            <person name="Reed J."/>
            <person name="Reid J.F."/>
            <person name="Ring B.Z."/>
            <person name="Ringwald M."/>
            <person name="Rost B."/>
            <person name="Ruan Y."/>
            <person name="Salzberg S.L."/>
            <person name="Sandelin A."/>
            <person name="Schneider C."/>
            <person name="Schoenbach C."/>
            <person name="Sekiguchi K."/>
            <person name="Semple C.A."/>
            <person name="Seno S."/>
            <person name="Sessa L."/>
            <person name="Sheng Y."/>
            <person name="Shibata Y."/>
            <person name="Shimada H."/>
            <person name="Shimada K."/>
            <person name="Silva D."/>
            <person name="Sinclair B."/>
            <person name="Sperling S."/>
            <person name="Stupka E."/>
            <person name="Sugiura K."/>
            <person name="Sultana R."/>
            <person name="Takenaka Y."/>
            <person name="Taki K."/>
            <person name="Tammoja K."/>
            <person name="Tan S.L."/>
            <person name="Tang S."/>
            <person name="Taylor M.S."/>
            <person name="Tegner J."/>
            <person name="Teichmann S.A."/>
            <person name="Ueda H.R."/>
            <person name="van Nimwegen E."/>
            <person name="Verardo R."/>
            <person name="Wei C.L."/>
            <person name="Yagi K."/>
            <person name="Yamanishi H."/>
            <person name="Zabarovsky E."/>
            <person name="Zhu S."/>
            <person name="Zimmer A."/>
            <person name="Hide W."/>
            <person name="Bult C."/>
            <person name="Grimmond S.M."/>
            <person name="Teasdale R.D."/>
            <person name="Liu E.T."/>
            <person name="Brusic V."/>
            <person name="Quackenbush J."/>
            <person name="Wahlestedt C."/>
            <person name="Mattick J.S."/>
            <person name="Hume D.A."/>
            <person name="Kai C."/>
            <person name="Sasaki D."/>
            <person name="Tomaru Y."/>
            <person name="Fukuda S."/>
            <person name="Kanamori-Katayama M."/>
            <person name="Suzuki M."/>
            <person name="Aoki J."/>
            <person name="Arakawa T."/>
            <person name="Iida J."/>
            <person name="Imamura K."/>
            <person name="Itoh M."/>
            <person name="Kato T."/>
            <person name="Kawaji H."/>
            <person name="Kawagashira N."/>
            <person name="Kawashima T."/>
            <person name="Kojima M."/>
            <person name="Kondo S."/>
            <person name="Konno H."/>
            <person name="Nakano K."/>
            <person name="Ninomiya N."/>
            <person name="Nishio T."/>
            <person name="Okada M."/>
            <person name="Plessy C."/>
            <person name="Shibata K."/>
            <person name="Shiraki T."/>
            <person name="Suzuki S."/>
            <person name="Tagami M."/>
            <person name="Waki K."/>
            <person name="Watahiki A."/>
            <person name="Okamura-Oho Y."/>
            <person name="Suzuki H."/>
            <person name="Kawai J."/>
            <person name="Hayashizaki Y."/>
        </authorList>
    </citation>
    <scope>NUCLEOTIDE SEQUENCE [LARGE SCALE MRNA]</scope>
    <source>
        <strain evidence="15">C57BL/6J</strain>
        <tissue evidence="16">Medulla oblongata</tissue>
        <tissue evidence="15">Testis</tissue>
    </source>
</reference>
<reference key="3">
    <citation type="journal article" date="2009" name="PLoS Biol.">
        <title>Lineage-specific biology revealed by a finished genome assembly of the mouse.</title>
        <authorList>
            <person name="Church D.M."/>
            <person name="Goodstadt L."/>
            <person name="Hillier L.W."/>
            <person name="Zody M.C."/>
            <person name="Goldstein S."/>
            <person name="She X."/>
            <person name="Bult C.J."/>
            <person name="Agarwala R."/>
            <person name="Cherry J.L."/>
            <person name="DiCuccio M."/>
            <person name="Hlavina W."/>
            <person name="Kapustin Y."/>
            <person name="Meric P."/>
            <person name="Maglott D."/>
            <person name="Birtle Z."/>
            <person name="Marques A.C."/>
            <person name="Graves T."/>
            <person name="Zhou S."/>
            <person name="Teague B."/>
            <person name="Potamousis K."/>
            <person name="Churas C."/>
            <person name="Place M."/>
            <person name="Herschleb J."/>
            <person name="Runnheim R."/>
            <person name="Forrest D."/>
            <person name="Amos-Landgraf J."/>
            <person name="Schwartz D.C."/>
            <person name="Cheng Z."/>
            <person name="Lindblad-Toh K."/>
            <person name="Eichler E.E."/>
            <person name="Ponting C.P."/>
        </authorList>
    </citation>
    <scope>NUCLEOTIDE SEQUENCE [LARGE SCALE GENOMIC DNA]</scope>
    <source>
        <strain>C57BL/6J</strain>
    </source>
</reference>
<reference evidence="13" key="4">
    <citation type="journal article" date="2004" name="Genome Res.">
        <title>The status, quality, and expansion of the NIH full-length cDNA project: the Mammalian Gene Collection (MGC).</title>
        <authorList>
            <consortium name="The MGC Project Team"/>
        </authorList>
    </citation>
    <scope>NUCLEOTIDE SEQUENCE [LARGE SCALE MRNA]</scope>
    <source>
        <tissue evidence="13">Eye</tissue>
    </source>
</reference>
<reference evidence="17" key="5">
    <citation type="journal article" date="2003" name="EMBO J.">
        <title>Structure and axon outgrowth inhibitor binding of the Nogo-66 receptor and related proteins.</title>
        <authorList>
            <person name="Barton W.A."/>
            <person name="Liu B.P."/>
            <person name="Tzvetkova D."/>
            <person name="Jeffrey P.D."/>
            <person name="Fournier A.E."/>
            <person name="Sah D."/>
            <person name="Cate R."/>
            <person name="Strittmatter S.M."/>
            <person name="Nikolov D.B."/>
        </authorList>
    </citation>
    <scope>IDENTIFICATION</scope>
    <scope>SUBCELLULAR LOCATION</scope>
    <scope>LACK OF INTERACTION WITH MAG; OMG AND RTN4</scope>
</reference>
<reference key="6">
    <citation type="journal article" date="2012" name="Nat. Neurosci.">
        <title>NgR1 and NgR3 are receptors for chondroitin sulfate proteoglycans.</title>
        <authorList>
            <person name="Dickendesher T.L."/>
            <person name="Baldwin K.T."/>
            <person name="Mironova Y.A."/>
            <person name="Koriyama Y."/>
            <person name="Raiker S.J."/>
            <person name="Askew K.L."/>
            <person name="Wood A."/>
            <person name="Geoffroy C.G."/>
            <person name="Zheng B."/>
            <person name="Liepmann C.D."/>
            <person name="Katagiri Y."/>
            <person name="Benowitz L.I."/>
            <person name="Geller H.M."/>
            <person name="Giger R.J."/>
        </authorList>
    </citation>
    <scope>DISRUPTION PHENOTYPE</scope>
    <scope>FUNCTION</scope>
    <scope>IDENTIFICATION IN A COMPLEX WITH RTN4R; RTN4RL1 AND NGFR</scope>
    <scope>TISSUE SPECIFICITY</scope>
</reference>
<reference key="7">
    <citation type="journal article" date="2012" name="Neuron">
        <title>The Nogo receptor family restricts synapse number in the developing hippocampus.</title>
        <authorList>
            <person name="Wills Z.P."/>
            <person name="Mandel-Brehm C."/>
            <person name="Mardinly A.R."/>
            <person name="McCord A.E."/>
            <person name="Giger R.J."/>
            <person name="Greenberg M.E."/>
        </authorList>
    </citation>
    <scope>DISRUPTION PHENOTYPE</scope>
    <scope>FUNCTION</scope>
</reference>
<reference key="8">
    <citation type="journal article" date="2015" name="Cell Death Dis.">
        <title>Myelin-associated glycoprotein modulates apoptosis of motoneurons during early postnatal development via NgR/p75(NTR) receptor-mediated activation of RhoA signaling pathways.</title>
        <authorList>
            <person name="Palandri A."/>
            <person name="Salvador V.R."/>
            <person name="Wojnacki J."/>
            <person name="Vivinetto A.L."/>
            <person name="Schnaar R.L."/>
            <person name="Lopez P.H."/>
        </authorList>
    </citation>
    <scope>DISRUPTION PHENOTYPE</scope>
    <scope>FUNCTION</scope>
</reference>
<reference key="9">
    <citation type="journal article" date="2017" name="J. Comp. Neurol.">
        <title>Agenesis of the corpus callosum in Nogo receptor deficient mice.</title>
        <authorList>
            <person name="Yoo S.W."/>
            <person name="Motari M.G."/>
            <person name="Schnaar R.L."/>
        </authorList>
    </citation>
    <scope>DISRUPTION PHENOTYPE</scope>
    <scope>FUNCTION</scope>
</reference>
<accession>Q8K0S5</accession>
<protein>
    <recommendedName>
        <fullName>Reticulon-4 receptor-like 1</fullName>
    </recommendedName>
    <alternativeName>
        <fullName>Nogo receptor-like 2</fullName>
    </alternativeName>
    <alternativeName>
        <fullName>Nogo-66 receptor homolog 2</fullName>
    </alternativeName>
    <alternativeName>
        <fullName>Nogo-66 receptor-related protein 3</fullName>
        <shortName evidence="11">NgR3</shortName>
    </alternativeName>
</protein>
<comment type="function">
    <text evidence="7 8 9 10">Cell surface receptor that plays a functionally redundant role in postnatal brain development and in regulating axon regeneration in the adult central nervous system (PubMed:22406547, PubMed:27339102). Contributes to normal axon migration across the brain midline and normal formation of the corpus callosum (PubMed:27339102). Protects motoneurons against apoptosis; protection against apoptosis is probably mediated by MAG (PubMed:26335717). Plays a role in inhibiting neurite outgrowth and axon regeneration via its binding to neuronal chondroitin sulfate proteoglycans (PubMed:22406547). Binds heparin (PubMed:22406547). Like other family members, plays a role in restricting the number dendritic spines and the number of synapses that are formed during brain development (PubMed:22325200). Signaling mediates activation of Rho and downstream reorganization of the actin cytoskeleton (PubMed:22325200).</text>
</comment>
<comment type="subunit">
    <text evidence="5 8">Identified in a complex that contains RTN4R, RTN4RL1 and NGFR; the interaction depends on the presence of chondroitin sulfate proteoglycans (PubMed:22406547). Does not interact with MAG, OMG and RTN4 (PubMed:12839991).</text>
</comment>
<comment type="subcellular location">
    <subcellularLocation>
        <location evidence="5">Cell membrane</location>
        <topology evidence="1">Lipid-anchor</topology>
        <topology evidence="1">GPI-anchor</topology>
    </subcellularLocation>
    <subcellularLocation>
        <location evidence="2">Membrane raft</location>
    </subcellularLocation>
    <subcellularLocation>
        <location evidence="1">Perikaryon</location>
    </subcellularLocation>
    <subcellularLocation>
        <location evidence="1">Cell projection</location>
    </subcellularLocation>
    <text evidence="1">Localized to the surface of neurons, including axons.</text>
</comment>
<comment type="tissue specificity">
    <text evidence="8">Detected in brain (at protein level) (PubMed:22406547). Detected in retina ganglion cell layer and inner nuclear layer (PubMed:22406547).</text>
</comment>
<comment type="developmental stage">
    <text evidence="6">At 13.5 dpc, strongly expressed in PNS ganglia and developing heart, and weakly expressed in brain and spinal cord. By postnatal day 1, strongly expressed in dorsal root ganglia and in dorsal and gray matter areas of spinal cord. Expressed in various adult brain structures including the amygdala, caudate putamen, cerebellum, cerebral cortex, hippocampus, olfactory bulb and thalamus.</text>
</comment>
<comment type="disruption phenotype">
    <text evidence="7 8 9 10">No visible phenotype (PubMed:22406547). Mice are born at the expected Mendelian rate, are viable and fertile (PubMed:22406547). Compared to wild-type littermates, cultured hippocampus neurons from mutant mice display an increased number of excitatory synapses (PubMed:22325200). Likewise, mice with a triple gene disruption that lack Rtn4r, Rtn4rl1 and Rtn4rl2 have no visible phenotype, are healthy and viable (PubMed:22325200, PubMed:22406547). Mice with a triple gene disruption that lack Rtn4r, Rtn4rl1 and Rtn4rl2 have normal brain size and grossly normal brain anatomy, but display defects of medial brain structures, including an absence of the fasciola cinereum, corpus callosum agenesis and formation of bilateral Probst bundles indicative of the failure of callosally projecting neurons to extend across the midline (PubMed:27339102). Mice with a triple gene disruption of Rtn4r, Rtn4rl1 and Rtn4rl2 display impaired ability to stay on a rotarod and increased spontaneous locomotion (PubMed:27339102). These mice display an increased number of excitatory synapses in the apical dendritic regions of hippocampus neurons, an increase in the complexity of dendrite structure and increased total dendrite length (PubMed:22325200). One month after birth, mice with a triple gene disruption that lack Rtn4r, Rtn4rl1 and Rtn4rl2 show a significant reduction in the survival of motoneurons (PubMed:26335717). Compared to wild-type or single mutants, cerebellar granule cells from mice lacking Rtn4r, Rtn4rl1 and Rtn4rl2 show decreased myelin-mediated inhibition of neurite outgrowth, an inhibition that is strongly decreased on myelin deficient in Mag, Rtn4 and Omg (PubMed:22406547). Mice lacking both Rtn4r and Rtn4rl1 show increased axon regeneration after injury; the same effect is observed when Rtn4r, Rtn4rl1 and Rtn4rl2 are disrupted (PubMed:22406547). Combined disruption of Rtn4r, Rtn4rl1 and Ptprs further increases axon regeneration after injury (PubMed:22406547). Single gene disruption of Rtn4r, Rtn4rl1 and Rtn4rl2 and combined disruption of Rtn4r and Rtn4rl2 have no effect on axon regeneration (PubMed:22406547).</text>
</comment>
<comment type="similarity">
    <text evidence="12">Belongs to the Nogo receptor family.</text>
</comment>
<proteinExistence type="evidence at protein level"/>
<name>R4RL1_MOUSE</name>
<sequence>MLRKGCCVELLLLLLAGELPLGGGCPRDCVCYPAPMTVSCQAHNFAAIPEGIPEDSERIFLQNNRITFLQQGHFSPAMVTLWIYSNNITFIAPNTFEGFVHLEELDLGDNRQLRTLAPETFQGLVKLHALYLYKCGLSALPAGIFGGLHSLQYLYLQDNHIEYLQDDIFVDLVNLSHLFLHGNKLWSLGQGIFRGLVNLDRLLLHENQLQWVHHKAFHDLHRLTTLFLFNNSLTELQGDCLAPLVALEFLRLNGNAWDCGCRARSLWEWLRRFRGSSSAVPCATPELRQGQDLKLLRVEDFRNCTGPVSPHQIKSHTLTTSDRAARKEHHPSHGASRDKGHPHGHPPGSRSGYKKAGKNCTSHRNRNQISKVSSGKELTELQDYAPDYQHKFSFDIMPTARPKRKGKCARRTPIRAPSGVQQASSGTALGAPLLAWILGLAVTLR</sequence>
<gene>
    <name evidence="18" type="primary">Rtn4rl1</name>
    <name evidence="14" type="synonym">Ngrl2</name>
</gene>
<organism>
    <name type="scientific">Mus musculus</name>
    <name type="common">Mouse</name>
    <dbReference type="NCBI Taxonomy" id="10090"/>
    <lineage>
        <taxon>Eukaryota</taxon>
        <taxon>Metazoa</taxon>
        <taxon>Chordata</taxon>
        <taxon>Craniata</taxon>
        <taxon>Vertebrata</taxon>
        <taxon>Euteleostomi</taxon>
        <taxon>Mammalia</taxon>
        <taxon>Eutheria</taxon>
        <taxon>Euarchontoglires</taxon>
        <taxon>Glires</taxon>
        <taxon>Rodentia</taxon>
        <taxon>Myomorpha</taxon>
        <taxon>Muroidea</taxon>
        <taxon>Muridae</taxon>
        <taxon>Murinae</taxon>
        <taxon>Mus</taxon>
        <taxon>Mus</taxon>
    </lineage>
</organism>
<feature type="signal peptide" evidence="3">
    <location>
        <begin position="1"/>
        <end position="24"/>
    </location>
</feature>
<feature type="chain" id="PRO_0000046044" description="Reticulon-4 receptor-like 1">
    <location>
        <begin position="25"/>
        <end position="424"/>
    </location>
</feature>
<feature type="propeptide" id="PRO_0000046045" description="Removed in mature form" evidence="3">
    <location>
        <begin position="425"/>
        <end position="445"/>
    </location>
</feature>
<feature type="transmembrane region" description="Helical" evidence="3">
    <location>
        <begin position="424"/>
        <end position="444"/>
    </location>
</feature>
<feature type="domain" description="LRRNT">
    <location>
        <begin position="25"/>
        <end position="54"/>
    </location>
</feature>
<feature type="repeat" description="LRR 1">
    <location>
        <begin position="55"/>
        <end position="76"/>
    </location>
</feature>
<feature type="repeat" description="LRR 2">
    <location>
        <begin position="77"/>
        <end position="98"/>
    </location>
</feature>
<feature type="repeat" description="LRR 3">
    <location>
        <begin position="101"/>
        <end position="123"/>
    </location>
</feature>
<feature type="repeat" description="LRR 4">
    <location>
        <begin position="126"/>
        <end position="147"/>
    </location>
</feature>
<feature type="repeat" description="LRR 5">
    <location>
        <begin position="150"/>
        <end position="171"/>
    </location>
</feature>
<feature type="repeat" description="LRR 6">
    <location>
        <begin position="174"/>
        <end position="195"/>
    </location>
</feature>
<feature type="repeat" description="LRR 7">
    <location>
        <begin position="198"/>
        <end position="219"/>
    </location>
</feature>
<feature type="repeat" description="LRR 8">
    <location>
        <begin position="222"/>
        <end position="243"/>
    </location>
</feature>
<feature type="domain" description="LRRCT">
    <location>
        <begin position="255"/>
        <end position="306"/>
    </location>
</feature>
<feature type="region of interest" description="Disordered" evidence="4">
    <location>
        <begin position="307"/>
        <end position="377"/>
    </location>
</feature>
<feature type="region of interest" description="Disordered" evidence="4">
    <location>
        <begin position="401"/>
        <end position="424"/>
    </location>
</feature>
<feature type="compositionally biased region" description="Basic residues" evidence="4">
    <location>
        <begin position="352"/>
        <end position="366"/>
    </location>
</feature>
<feature type="compositionally biased region" description="Basic residues" evidence="4">
    <location>
        <begin position="401"/>
        <end position="413"/>
    </location>
</feature>
<feature type="lipid moiety-binding region" description="GPI-anchor amidated serine" evidence="3">
    <location>
        <position position="424"/>
    </location>
</feature>
<evidence type="ECO:0000250" key="1">
    <source>
        <dbReference type="UniProtKB" id="Q80WD0"/>
    </source>
</evidence>
<evidence type="ECO:0000250" key="2">
    <source>
        <dbReference type="UniProtKB" id="Q86UN2"/>
    </source>
</evidence>
<evidence type="ECO:0000255" key="3"/>
<evidence type="ECO:0000256" key="4">
    <source>
        <dbReference type="SAM" id="MobiDB-lite"/>
    </source>
</evidence>
<evidence type="ECO:0000269" key="5">
    <source>
    </source>
</evidence>
<evidence type="ECO:0000269" key="6">
    <source>
    </source>
</evidence>
<evidence type="ECO:0000269" key="7">
    <source>
    </source>
</evidence>
<evidence type="ECO:0000269" key="8">
    <source>
    </source>
</evidence>
<evidence type="ECO:0000269" key="9">
    <source>
    </source>
</evidence>
<evidence type="ECO:0000269" key="10">
    <source>
    </source>
</evidence>
<evidence type="ECO:0000303" key="11">
    <source>
    </source>
</evidence>
<evidence type="ECO:0000305" key="12"/>
<evidence type="ECO:0000312" key="13">
    <source>
        <dbReference type="EMBL" id="AAH30471.1"/>
    </source>
</evidence>
<evidence type="ECO:0000312" key="14">
    <source>
        <dbReference type="EMBL" id="AAP82835.1"/>
    </source>
</evidence>
<evidence type="ECO:0000312" key="15">
    <source>
        <dbReference type="EMBL" id="BAC28223.1"/>
    </source>
</evidence>
<evidence type="ECO:0000312" key="16">
    <source>
        <dbReference type="EMBL" id="BAE24396.1"/>
    </source>
</evidence>
<evidence type="ECO:0000312" key="17">
    <source>
        <dbReference type="EMBL" id="DAA01387.1"/>
    </source>
</evidence>
<evidence type="ECO:0000312" key="18">
    <source>
        <dbReference type="MGI" id="MGI:2661375"/>
    </source>
</evidence>